<proteinExistence type="evidence at protein level"/>
<accession>P73720</accession>
<comment type="function">
    <text>May be involved in the functional assembly of glucose 6-phosphate dehydrogenase.</text>
</comment>
<organism>
    <name type="scientific">Synechocystis sp. (strain ATCC 27184 / PCC 6803 / Kazusa)</name>
    <dbReference type="NCBI Taxonomy" id="1111708"/>
    <lineage>
        <taxon>Bacteria</taxon>
        <taxon>Bacillati</taxon>
        <taxon>Cyanobacteriota</taxon>
        <taxon>Cyanophyceae</taxon>
        <taxon>Synechococcales</taxon>
        <taxon>Merismopediaceae</taxon>
        <taxon>Synechocystis</taxon>
    </lineage>
</organism>
<gene>
    <name type="primary">opcA</name>
    <name type="ordered locus">slr1734</name>
</gene>
<keyword id="KW-0002">3D-structure</keyword>
<keyword id="KW-1185">Reference proteome</keyword>
<feature type="chain" id="PRO_0000058059" description="Putative OxPP cycle protein OpcA">
    <location>
        <begin position="1"/>
        <end position="475"/>
    </location>
</feature>
<dbReference type="EMBL" id="BA000022">
    <property type="protein sequence ID" value="BAA17768.1"/>
    <property type="molecule type" value="Genomic_DNA"/>
</dbReference>
<dbReference type="PIR" id="S74807">
    <property type="entry name" value="S74807"/>
</dbReference>
<dbReference type="PDB" id="9EMM">
    <property type="method" value="EM"/>
    <property type="resolution" value="3.70 A"/>
    <property type="chains" value="E=1-475"/>
</dbReference>
<dbReference type="PDBsum" id="9EMM"/>
<dbReference type="EMDB" id="EMD-19820"/>
<dbReference type="SMR" id="P73720"/>
<dbReference type="STRING" id="1148.gene:10498635"/>
<dbReference type="PaxDb" id="1148-1652850"/>
<dbReference type="EnsemblBacteria" id="BAA17768">
    <property type="protein sequence ID" value="BAA17768"/>
    <property type="gene ID" value="BAA17768"/>
</dbReference>
<dbReference type="KEGG" id="syn:slr1734"/>
<dbReference type="eggNOG" id="COG3409">
    <property type="taxonomic scope" value="Bacteria"/>
</dbReference>
<dbReference type="eggNOG" id="COG3429">
    <property type="taxonomic scope" value="Bacteria"/>
</dbReference>
<dbReference type="InParanoid" id="P73720"/>
<dbReference type="Proteomes" id="UP000001425">
    <property type="component" value="Chromosome"/>
</dbReference>
<dbReference type="Gene3D" id="1.10.101.10">
    <property type="entry name" value="PGBD-like superfamily/PGBD"/>
    <property type="match status" value="1"/>
</dbReference>
<dbReference type="InterPro" id="IPR004555">
    <property type="entry name" value="G6PDH_assembly_OpcA"/>
</dbReference>
<dbReference type="InterPro" id="IPR046802">
    <property type="entry name" value="OpcA_G6PD_C"/>
</dbReference>
<dbReference type="InterPro" id="IPR046801">
    <property type="entry name" value="OpcA_G6PD_N"/>
</dbReference>
<dbReference type="InterPro" id="IPR002477">
    <property type="entry name" value="Peptidoglycan-bd-like"/>
</dbReference>
<dbReference type="InterPro" id="IPR036365">
    <property type="entry name" value="PGBD-like_sf"/>
</dbReference>
<dbReference type="InterPro" id="IPR036366">
    <property type="entry name" value="PGBDSf"/>
</dbReference>
<dbReference type="NCBIfam" id="TIGR00534">
    <property type="entry name" value="OpcA"/>
    <property type="match status" value="1"/>
</dbReference>
<dbReference type="PANTHER" id="PTHR38658">
    <property type="entry name" value="OXPP CYCLE PROTEIN OPCA-RELATED"/>
    <property type="match status" value="1"/>
</dbReference>
<dbReference type="PANTHER" id="PTHR38658:SF1">
    <property type="entry name" value="OXPP CYCLE PROTEIN OPCA-RELATED"/>
    <property type="match status" value="1"/>
</dbReference>
<dbReference type="Pfam" id="PF10128">
    <property type="entry name" value="OpcA_G6PD_assem"/>
    <property type="match status" value="1"/>
</dbReference>
<dbReference type="Pfam" id="PF20171">
    <property type="entry name" value="OpcA_G6PD_C"/>
    <property type="match status" value="1"/>
</dbReference>
<dbReference type="Pfam" id="PF01471">
    <property type="entry name" value="PG_binding_1"/>
    <property type="match status" value="1"/>
</dbReference>
<dbReference type="SUPFAM" id="SSF47090">
    <property type="entry name" value="PGBD-like"/>
    <property type="match status" value="1"/>
</dbReference>
<sequence>MGGKYQRHCPVRFHWSHCMSTTQAPPLVSLQAPKDVSLEAIESELAQIWQTSAQKEEGLIATRATTFSFLVYEPDRVQSLLAALGYYTGPIDGITGPRMTAAIKSAQKALGVTATGLSSPEFKQALQTAFETAHREGNLLSTAERITKPYSPDLEGSGIADTIAASNPCRIITLCPTAEDDQGVQAQLSAYCPIQKTHQNTLICCEYITLRGTSDALERIGGVITELMLPTLPKYVWWKASPEAEYGLFQRLLSHADMIIVDSSIFNNPEQDLLQLAQLVNKPEAIADLNWSRLAPWQELTAEAFDPPERRSAVGEIDQISIDYEKGNHAQALMYLGWVASRLQWTPVSYSYQPGVYEIHKIQFCAPNQRPIEAELAGLPLADTGQVLGDLISLKLGSTNTQAQCGTVLCSGTVGCMRMEAGGGAQNYRVQQVTALDDQNTEQLLGRQLQRWGRDALYDESMAIVLAILQLSQAG</sequence>
<reference key="1">
    <citation type="journal article" date="1996" name="DNA Res.">
        <title>Sequence analysis of the genome of the unicellular cyanobacterium Synechocystis sp. strain PCC6803. II. Sequence determination of the entire genome and assignment of potential protein-coding regions.</title>
        <authorList>
            <person name="Kaneko T."/>
            <person name="Sato S."/>
            <person name="Kotani H."/>
            <person name="Tanaka A."/>
            <person name="Asamizu E."/>
            <person name="Nakamura Y."/>
            <person name="Miyajima N."/>
            <person name="Hirosawa M."/>
            <person name="Sugiura M."/>
            <person name="Sasamoto S."/>
            <person name="Kimura T."/>
            <person name="Hosouchi T."/>
            <person name="Matsuno A."/>
            <person name="Muraki A."/>
            <person name="Nakazaki N."/>
            <person name="Naruo K."/>
            <person name="Okumura S."/>
            <person name="Shimpo S."/>
            <person name="Takeuchi C."/>
            <person name="Wada T."/>
            <person name="Watanabe A."/>
            <person name="Yamada M."/>
            <person name="Yasuda M."/>
            <person name="Tabata S."/>
        </authorList>
    </citation>
    <scope>NUCLEOTIDE SEQUENCE [LARGE SCALE GENOMIC DNA]</scope>
    <source>
        <strain>ATCC 27184 / PCC 6803 / Kazusa</strain>
    </source>
</reference>
<name>OPCA_SYNY3</name>
<protein>
    <recommendedName>
        <fullName>Putative OxPP cycle protein OpcA</fullName>
    </recommendedName>
</protein>